<organism>
    <name type="scientific">Ambystoma mexicanum</name>
    <name type="common">Axolotl</name>
    <dbReference type="NCBI Taxonomy" id="8296"/>
    <lineage>
        <taxon>Eukaryota</taxon>
        <taxon>Metazoa</taxon>
        <taxon>Chordata</taxon>
        <taxon>Craniata</taxon>
        <taxon>Vertebrata</taxon>
        <taxon>Euteleostomi</taxon>
        <taxon>Amphibia</taxon>
        <taxon>Batrachia</taxon>
        <taxon>Caudata</taxon>
        <taxon>Salamandroidea</taxon>
        <taxon>Ambystomatidae</taxon>
        <taxon>Ambystoma</taxon>
    </lineage>
</organism>
<reference key="1">
    <citation type="journal article" date="1996" name="Development">
        <title>Nerve dependency of regeneration: the role of Distal-less and FGF signaling in amphibian limb regeneration.</title>
        <authorList>
            <person name="Mullen L.M."/>
            <person name="Bryant S.V."/>
            <person name="Torok M.A."/>
            <person name="Blumberg B."/>
            <person name="Gardiner D.M."/>
        </authorList>
    </citation>
    <scope>NUCLEOTIDE SEQUENCE [MRNA]</scope>
</reference>
<evidence type="ECO:0000255" key="1">
    <source>
        <dbReference type="PROSITE-ProRule" id="PRU00108"/>
    </source>
</evidence>
<evidence type="ECO:0000256" key="2">
    <source>
        <dbReference type="SAM" id="MobiDB-lite"/>
    </source>
</evidence>
<evidence type="ECO:0000305" key="3"/>
<proteinExistence type="evidence at transcript level"/>
<protein>
    <recommendedName>
        <fullName>Homeobox protein DLX-3</fullName>
    </recommendedName>
</protein>
<keyword id="KW-0217">Developmental protein</keyword>
<keyword id="KW-0238">DNA-binding</keyword>
<keyword id="KW-0371">Homeobox</keyword>
<keyword id="KW-0539">Nucleus</keyword>
<feature type="chain" id="PRO_0000049040" description="Homeobox protein DLX-3">
    <location>
        <begin position="1"/>
        <end position="280"/>
    </location>
</feature>
<feature type="DNA-binding region" description="Homeobox" evidence="1">
    <location>
        <begin position="126"/>
        <end position="185"/>
    </location>
</feature>
<feature type="region of interest" description="Disordered" evidence="2">
    <location>
        <begin position="1"/>
        <end position="38"/>
    </location>
</feature>
<feature type="region of interest" description="Disordered" evidence="2">
    <location>
        <begin position="189"/>
        <end position="252"/>
    </location>
</feature>
<feature type="compositionally biased region" description="Low complexity" evidence="2">
    <location>
        <begin position="1"/>
        <end position="13"/>
    </location>
</feature>
<feature type="compositionally biased region" description="Polar residues" evidence="2">
    <location>
        <begin position="20"/>
        <end position="30"/>
    </location>
</feature>
<feature type="compositionally biased region" description="Polar residues" evidence="2">
    <location>
        <begin position="199"/>
        <end position="208"/>
    </location>
</feature>
<name>DLX3_AMBME</name>
<dbReference type="EMBL" id="U59480">
    <property type="protein sequence ID" value="AAB49668.1"/>
    <property type="molecule type" value="mRNA"/>
</dbReference>
<dbReference type="SMR" id="Q90229"/>
<dbReference type="GO" id="GO:0005634">
    <property type="term" value="C:nucleus"/>
    <property type="evidence" value="ECO:0007669"/>
    <property type="project" value="UniProtKB-SubCell"/>
</dbReference>
<dbReference type="GO" id="GO:0000981">
    <property type="term" value="F:DNA-binding transcription factor activity, RNA polymerase II-specific"/>
    <property type="evidence" value="ECO:0007669"/>
    <property type="project" value="InterPro"/>
</dbReference>
<dbReference type="GO" id="GO:0000978">
    <property type="term" value="F:RNA polymerase II cis-regulatory region sequence-specific DNA binding"/>
    <property type="evidence" value="ECO:0007669"/>
    <property type="project" value="TreeGrafter"/>
</dbReference>
<dbReference type="GO" id="GO:0030855">
    <property type="term" value="P:epithelial cell differentiation"/>
    <property type="evidence" value="ECO:0007669"/>
    <property type="project" value="TreeGrafter"/>
</dbReference>
<dbReference type="CDD" id="cd00086">
    <property type="entry name" value="homeodomain"/>
    <property type="match status" value="1"/>
</dbReference>
<dbReference type="FunFam" id="1.10.10.60:FF:000048">
    <property type="entry name" value="Distal-less homeobox 2"/>
    <property type="match status" value="1"/>
</dbReference>
<dbReference type="Gene3D" id="1.10.10.60">
    <property type="entry name" value="Homeodomain-like"/>
    <property type="match status" value="1"/>
</dbReference>
<dbReference type="InterPro" id="IPR050460">
    <property type="entry name" value="Distal-less_Homeobox_TF"/>
</dbReference>
<dbReference type="InterPro" id="IPR022135">
    <property type="entry name" value="Distal-less_N"/>
</dbReference>
<dbReference type="InterPro" id="IPR001356">
    <property type="entry name" value="HD"/>
</dbReference>
<dbReference type="InterPro" id="IPR020479">
    <property type="entry name" value="HD_metazoa"/>
</dbReference>
<dbReference type="InterPro" id="IPR017970">
    <property type="entry name" value="Homeobox_CS"/>
</dbReference>
<dbReference type="InterPro" id="IPR009057">
    <property type="entry name" value="Homeodomain-like_sf"/>
</dbReference>
<dbReference type="InterPro" id="IPR000047">
    <property type="entry name" value="HTH_motif"/>
</dbReference>
<dbReference type="PANTHER" id="PTHR24327">
    <property type="entry name" value="HOMEOBOX PROTEIN"/>
    <property type="match status" value="1"/>
</dbReference>
<dbReference type="PANTHER" id="PTHR24327:SF28">
    <property type="entry name" value="HOMEOBOX PROTEIN DLX-3"/>
    <property type="match status" value="1"/>
</dbReference>
<dbReference type="Pfam" id="PF12413">
    <property type="entry name" value="DLL_N"/>
    <property type="match status" value="1"/>
</dbReference>
<dbReference type="Pfam" id="PF00046">
    <property type="entry name" value="Homeodomain"/>
    <property type="match status" value="1"/>
</dbReference>
<dbReference type="PRINTS" id="PR00024">
    <property type="entry name" value="HOMEOBOX"/>
</dbReference>
<dbReference type="PRINTS" id="PR00031">
    <property type="entry name" value="HTHREPRESSR"/>
</dbReference>
<dbReference type="SMART" id="SM00389">
    <property type="entry name" value="HOX"/>
    <property type="match status" value="1"/>
</dbReference>
<dbReference type="SUPFAM" id="SSF46689">
    <property type="entry name" value="Homeodomain-like"/>
    <property type="match status" value="1"/>
</dbReference>
<dbReference type="PROSITE" id="PS00027">
    <property type="entry name" value="HOMEOBOX_1"/>
    <property type="match status" value="1"/>
</dbReference>
<dbReference type="PROSITE" id="PS50071">
    <property type="entry name" value="HOMEOBOX_2"/>
    <property type="match status" value="1"/>
</dbReference>
<sequence length="280" mass="31201">MSTILTDLSSSLSCHAASKDSPTLPESSATDLGYYSTHGGTHSPHDYFQSQPYPQPINHHYPYHQFNLNGLGGPGTYSPKSDYPYGGSYRQYGHYRESAMAVQEPVSVKEEPEPEVRMVNGKPKKIRKPRTIYSSYQLAALQRRFQKAQYLALPERAELAAQLGLTQTQVKIWFQNRRSKFKKLYKNGEVPGMEHSPDNSDSMACNSPASPPVWDSNPPSRVPHPQAQPLPHNSSPSYLEDYNPGTTMNRTWRGTPAAAQLDAPYPSGTGSVLAGCWWKN</sequence>
<accession>Q90229</accession>
<comment type="subcellular location">
    <subcellularLocation>
        <location evidence="1">Nucleus</location>
    </subcellularLocation>
</comment>
<comment type="similarity">
    <text evidence="3">Belongs to the distal-less homeobox family.</text>
</comment>
<gene>
    <name type="primary">DLX-3</name>
</gene>